<organism>
    <name type="scientific">Clostridium perfringens (strain ATCC 13124 / DSM 756 / JCM 1290 / NCIMB 6125 / NCTC 8237 / Type A)</name>
    <dbReference type="NCBI Taxonomy" id="195103"/>
    <lineage>
        <taxon>Bacteria</taxon>
        <taxon>Bacillati</taxon>
        <taxon>Bacillota</taxon>
        <taxon>Clostridia</taxon>
        <taxon>Eubacteriales</taxon>
        <taxon>Clostridiaceae</taxon>
        <taxon>Clostridium</taxon>
    </lineage>
</organism>
<proteinExistence type="inferred from homology"/>
<name>PYRB_CLOP1</name>
<comment type="function">
    <text evidence="1">Catalyzes the condensation of carbamoyl phosphate and aspartate to form carbamoyl aspartate and inorganic phosphate, the committed step in the de novo pyrimidine nucleotide biosynthesis pathway.</text>
</comment>
<comment type="catalytic activity">
    <reaction evidence="1">
        <text>carbamoyl phosphate + L-aspartate = N-carbamoyl-L-aspartate + phosphate + H(+)</text>
        <dbReference type="Rhea" id="RHEA:20013"/>
        <dbReference type="ChEBI" id="CHEBI:15378"/>
        <dbReference type="ChEBI" id="CHEBI:29991"/>
        <dbReference type="ChEBI" id="CHEBI:32814"/>
        <dbReference type="ChEBI" id="CHEBI:43474"/>
        <dbReference type="ChEBI" id="CHEBI:58228"/>
        <dbReference type="EC" id="2.1.3.2"/>
    </reaction>
</comment>
<comment type="pathway">
    <text evidence="1">Pyrimidine metabolism; UMP biosynthesis via de novo pathway; (S)-dihydroorotate from bicarbonate: step 2/3.</text>
</comment>
<comment type="subunit">
    <text evidence="1">Heterododecamer (2C3:3R2) of six catalytic PyrB chains organized as two trimers (C3), and six regulatory PyrI chains organized as three dimers (R2).</text>
</comment>
<comment type="similarity">
    <text evidence="1">Belongs to the aspartate/ornithine carbamoyltransferase superfamily. ATCase family.</text>
</comment>
<protein>
    <recommendedName>
        <fullName evidence="1">Aspartate carbamoyltransferase catalytic subunit</fullName>
        <ecNumber evidence="1">2.1.3.2</ecNumber>
    </recommendedName>
    <alternativeName>
        <fullName evidence="1">Aspartate transcarbamylase</fullName>
        <shortName evidence="1">ATCase</shortName>
    </alternativeName>
</protein>
<dbReference type="EC" id="2.1.3.2" evidence="1"/>
<dbReference type="EMBL" id="CP000246">
    <property type="protein sequence ID" value="ABG83225.1"/>
    <property type="molecule type" value="Genomic_DNA"/>
</dbReference>
<dbReference type="RefSeq" id="WP_003453538.1">
    <property type="nucleotide sequence ID" value="NC_008261.1"/>
</dbReference>
<dbReference type="SMR" id="Q0TRA8"/>
<dbReference type="STRING" id="195103.CPF_1387"/>
<dbReference type="PaxDb" id="195103-CPF_1387"/>
<dbReference type="GeneID" id="93002296"/>
<dbReference type="KEGG" id="cpf:CPF_1387"/>
<dbReference type="eggNOG" id="COG0540">
    <property type="taxonomic scope" value="Bacteria"/>
</dbReference>
<dbReference type="HOGENOM" id="CLU_043846_1_2_9"/>
<dbReference type="UniPathway" id="UPA00070">
    <property type="reaction ID" value="UER00116"/>
</dbReference>
<dbReference type="Proteomes" id="UP000001823">
    <property type="component" value="Chromosome"/>
</dbReference>
<dbReference type="GO" id="GO:0016597">
    <property type="term" value="F:amino acid binding"/>
    <property type="evidence" value="ECO:0007669"/>
    <property type="project" value="InterPro"/>
</dbReference>
<dbReference type="GO" id="GO:0004070">
    <property type="term" value="F:aspartate carbamoyltransferase activity"/>
    <property type="evidence" value="ECO:0007669"/>
    <property type="project" value="UniProtKB-UniRule"/>
</dbReference>
<dbReference type="GO" id="GO:0006207">
    <property type="term" value="P:'de novo' pyrimidine nucleobase biosynthetic process"/>
    <property type="evidence" value="ECO:0007669"/>
    <property type="project" value="InterPro"/>
</dbReference>
<dbReference type="GO" id="GO:0044205">
    <property type="term" value="P:'de novo' UMP biosynthetic process"/>
    <property type="evidence" value="ECO:0007669"/>
    <property type="project" value="UniProtKB-UniRule"/>
</dbReference>
<dbReference type="GO" id="GO:0006520">
    <property type="term" value="P:amino acid metabolic process"/>
    <property type="evidence" value="ECO:0007669"/>
    <property type="project" value="InterPro"/>
</dbReference>
<dbReference type="FunFam" id="3.40.50.1370:FF:000001">
    <property type="entry name" value="Aspartate carbamoyltransferase"/>
    <property type="match status" value="1"/>
</dbReference>
<dbReference type="FunFam" id="3.40.50.1370:FF:000002">
    <property type="entry name" value="Aspartate carbamoyltransferase 2"/>
    <property type="match status" value="1"/>
</dbReference>
<dbReference type="Gene3D" id="3.40.50.1370">
    <property type="entry name" value="Aspartate/ornithine carbamoyltransferase"/>
    <property type="match status" value="2"/>
</dbReference>
<dbReference type="HAMAP" id="MF_00001">
    <property type="entry name" value="Asp_carb_tr"/>
    <property type="match status" value="1"/>
</dbReference>
<dbReference type="InterPro" id="IPR006132">
    <property type="entry name" value="Asp/Orn_carbamoyltranf_P-bd"/>
</dbReference>
<dbReference type="InterPro" id="IPR006130">
    <property type="entry name" value="Asp/Orn_carbamoylTrfase"/>
</dbReference>
<dbReference type="InterPro" id="IPR036901">
    <property type="entry name" value="Asp/Orn_carbamoylTrfase_sf"/>
</dbReference>
<dbReference type="InterPro" id="IPR002082">
    <property type="entry name" value="Asp_carbamoyltransf"/>
</dbReference>
<dbReference type="InterPro" id="IPR006131">
    <property type="entry name" value="Asp_carbamoyltransf_Asp/Orn-bd"/>
</dbReference>
<dbReference type="NCBIfam" id="TIGR00670">
    <property type="entry name" value="asp_carb_tr"/>
    <property type="match status" value="1"/>
</dbReference>
<dbReference type="NCBIfam" id="NF002032">
    <property type="entry name" value="PRK00856.1"/>
    <property type="match status" value="1"/>
</dbReference>
<dbReference type="PANTHER" id="PTHR45753:SF6">
    <property type="entry name" value="ASPARTATE CARBAMOYLTRANSFERASE"/>
    <property type="match status" value="1"/>
</dbReference>
<dbReference type="PANTHER" id="PTHR45753">
    <property type="entry name" value="ORNITHINE CARBAMOYLTRANSFERASE, MITOCHONDRIAL"/>
    <property type="match status" value="1"/>
</dbReference>
<dbReference type="Pfam" id="PF00185">
    <property type="entry name" value="OTCace"/>
    <property type="match status" value="1"/>
</dbReference>
<dbReference type="Pfam" id="PF02729">
    <property type="entry name" value="OTCace_N"/>
    <property type="match status" value="1"/>
</dbReference>
<dbReference type="PRINTS" id="PR00100">
    <property type="entry name" value="AOTCASE"/>
</dbReference>
<dbReference type="PRINTS" id="PR00101">
    <property type="entry name" value="ATCASE"/>
</dbReference>
<dbReference type="SUPFAM" id="SSF53671">
    <property type="entry name" value="Aspartate/ornithine carbamoyltransferase"/>
    <property type="match status" value="1"/>
</dbReference>
<dbReference type="PROSITE" id="PS00097">
    <property type="entry name" value="CARBAMOYLTRANSFERASE"/>
    <property type="match status" value="1"/>
</dbReference>
<reference key="1">
    <citation type="journal article" date="2006" name="Genome Res.">
        <title>Skewed genomic variability in strains of the toxigenic bacterial pathogen, Clostridium perfringens.</title>
        <authorList>
            <person name="Myers G.S.A."/>
            <person name="Rasko D.A."/>
            <person name="Cheung J.K."/>
            <person name="Ravel J."/>
            <person name="Seshadri R."/>
            <person name="DeBoy R.T."/>
            <person name="Ren Q."/>
            <person name="Varga J."/>
            <person name="Awad M.M."/>
            <person name="Brinkac L.M."/>
            <person name="Daugherty S.C."/>
            <person name="Haft D.H."/>
            <person name="Dodson R.J."/>
            <person name="Madupu R."/>
            <person name="Nelson W.C."/>
            <person name="Rosovitz M.J."/>
            <person name="Sullivan S.A."/>
            <person name="Khouri H."/>
            <person name="Dimitrov G.I."/>
            <person name="Watkins K.L."/>
            <person name="Mulligan S."/>
            <person name="Benton J."/>
            <person name="Radune D."/>
            <person name="Fisher D.J."/>
            <person name="Atkins H.S."/>
            <person name="Hiscox T."/>
            <person name="Jost B.H."/>
            <person name="Billington S.J."/>
            <person name="Songer J.G."/>
            <person name="McClane B.A."/>
            <person name="Titball R.W."/>
            <person name="Rood J.I."/>
            <person name="Melville S.B."/>
            <person name="Paulsen I.T."/>
        </authorList>
    </citation>
    <scope>NUCLEOTIDE SEQUENCE [LARGE SCALE GENOMIC DNA]</scope>
    <source>
        <strain>ATCC 13124 / DSM 756 / JCM 1290 / NCIMB 6125 / NCTC 8237 / S 107 / Type A</strain>
    </source>
</reference>
<feature type="chain" id="PRO_0000321093" description="Aspartate carbamoyltransferase catalytic subunit">
    <location>
        <begin position="1"/>
        <end position="307"/>
    </location>
</feature>
<feature type="binding site" evidence="1">
    <location>
        <position position="54"/>
    </location>
    <ligand>
        <name>carbamoyl phosphate</name>
        <dbReference type="ChEBI" id="CHEBI:58228"/>
    </ligand>
</feature>
<feature type="binding site" evidence="1">
    <location>
        <position position="55"/>
    </location>
    <ligand>
        <name>carbamoyl phosphate</name>
        <dbReference type="ChEBI" id="CHEBI:58228"/>
    </ligand>
</feature>
<feature type="binding site" evidence="1">
    <location>
        <position position="83"/>
    </location>
    <ligand>
        <name>L-aspartate</name>
        <dbReference type="ChEBI" id="CHEBI:29991"/>
    </ligand>
</feature>
<feature type="binding site" evidence="1">
    <location>
        <position position="104"/>
    </location>
    <ligand>
        <name>carbamoyl phosphate</name>
        <dbReference type="ChEBI" id="CHEBI:58228"/>
    </ligand>
</feature>
<feature type="binding site" evidence="1">
    <location>
        <position position="132"/>
    </location>
    <ligand>
        <name>carbamoyl phosphate</name>
        <dbReference type="ChEBI" id="CHEBI:58228"/>
    </ligand>
</feature>
<feature type="binding site" evidence="1">
    <location>
        <position position="135"/>
    </location>
    <ligand>
        <name>carbamoyl phosphate</name>
        <dbReference type="ChEBI" id="CHEBI:58228"/>
    </ligand>
</feature>
<feature type="binding site" evidence="1">
    <location>
        <position position="165"/>
    </location>
    <ligand>
        <name>L-aspartate</name>
        <dbReference type="ChEBI" id="CHEBI:29991"/>
    </ligand>
</feature>
<feature type="binding site" evidence="1">
    <location>
        <position position="228"/>
    </location>
    <ligand>
        <name>L-aspartate</name>
        <dbReference type="ChEBI" id="CHEBI:29991"/>
    </ligand>
</feature>
<feature type="binding site" evidence="1">
    <location>
        <position position="267"/>
    </location>
    <ligand>
        <name>carbamoyl phosphate</name>
        <dbReference type="ChEBI" id="CHEBI:58228"/>
    </ligand>
</feature>
<feature type="binding site" evidence="1">
    <location>
        <position position="268"/>
    </location>
    <ligand>
        <name>carbamoyl phosphate</name>
        <dbReference type="ChEBI" id="CHEBI:58228"/>
    </ligand>
</feature>
<evidence type="ECO:0000255" key="1">
    <source>
        <dbReference type="HAMAP-Rule" id="MF_00001"/>
    </source>
</evidence>
<gene>
    <name evidence="1" type="primary">pyrB</name>
    <name type="ordered locus">CPF_1387</name>
</gene>
<keyword id="KW-0665">Pyrimidine biosynthesis</keyword>
<keyword id="KW-0808">Transferase</keyword>
<sequence>MLKNKHLLDPSDFTIEEFDEIFKLAHQIMANPKEYQNICNGKILATLFYEPSTRTRLSFESAMLRLGGQVIGFSEPNSSSVSKGESLRDTIKTVNCYADLIAMRHPLEGAAKVASMYSDIPVINAGDGGHQHPTQTLTDLLTIKEYKGNLEGNTIALCGDLKFGRTVHSLIKALSRYKNNKFILISPIELRIPNYIREQILEKNNIEYKEITSLEEGIKEADILYMTRIQRERFVDQSEYERLKDVYVLDEAKMKGAKEDMMVLHPLPRVNEIAYEVDEDSRAFYFKQAKCGMYVRMALMAKLLGEA</sequence>
<accession>Q0TRA8</accession>